<feature type="signal peptide" evidence="2">
    <location>
        <begin position="1"/>
        <end position="15"/>
    </location>
</feature>
<feature type="chain" id="PRO_0000036243" description="Alpha-2-macroglobulin">
    <location>
        <begin position="16"/>
        <end position="1582"/>
    </location>
</feature>
<feature type="cross-link" description="Isoglutamyl cysteine thioester (Cys-Gln)" evidence="1">
    <location>
        <begin position="1080"/>
        <end position="1083"/>
    </location>
</feature>
<comment type="function">
    <text evidence="1">Protects the bacterial cell from host peptidases.</text>
</comment>
<comment type="similarity">
    <text evidence="3">Belongs to the protease inhibitor I39 (alpha-2-macroglobulin) family. Bacterial alpha-2-macroglobulin subfamily.</text>
</comment>
<reference key="1">
    <citation type="journal article" date="2002" name="Nature">
        <title>Genome sequence of the plant pathogen Ralstonia solanacearum.</title>
        <authorList>
            <person name="Salanoubat M."/>
            <person name="Genin S."/>
            <person name="Artiguenave F."/>
            <person name="Gouzy J."/>
            <person name="Mangenot S."/>
            <person name="Arlat M."/>
            <person name="Billault A."/>
            <person name="Brottier P."/>
            <person name="Camus J.-C."/>
            <person name="Cattolico L."/>
            <person name="Chandler M."/>
            <person name="Choisne N."/>
            <person name="Claudel-Renard C."/>
            <person name="Cunnac S."/>
            <person name="Demange N."/>
            <person name="Gaspin C."/>
            <person name="Lavie M."/>
            <person name="Moisan A."/>
            <person name="Robert C."/>
            <person name="Saurin W."/>
            <person name="Schiex T."/>
            <person name="Siguier P."/>
            <person name="Thebault P."/>
            <person name="Whalen M."/>
            <person name="Wincker P."/>
            <person name="Levy M."/>
            <person name="Weissenbach J."/>
            <person name="Boucher C.A."/>
        </authorList>
    </citation>
    <scope>NUCLEOTIDE SEQUENCE [LARGE SCALE GENOMIC DNA]</scope>
    <source>
        <strain>ATCC BAA-1114 / GMI1000</strain>
    </source>
</reference>
<gene>
    <name type="ordered locus">RSc3030</name>
    <name type="ORF">RS04727</name>
</gene>
<name>A2MG_RALN1</name>
<organism>
    <name type="scientific">Ralstonia nicotianae (strain ATCC BAA-1114 / GMI1000)</name>
    <name type="common">Ralstonia solanacearum</name>
    <dbReference type="NCBI Taxonomy" id="267608"/>
    <lineage>
        <taxon>Bacteria</taxon>
        <taxon>Pseudomonadati</taxon>
        <taxon>Pseudomonadota</taxon>
        <taxon>Betaproteobacteria</taxon>
        <taxon>Burkholderiales</taxon>
        <taxon>Burkholderiaceae</taxon>
        <taxon>Ralstonia</taxon>
        <taxon>Ralstonia solanacearum species complex</taxon>
    </lineage>
</organism>
<evidence type="ECO:0000250" key="1">
    <source>
        <dbReference type="UniProtKB" id="P76578"/>
    </source>
</evidence>
<evidence type="ECO:0000255" key="2"/>
<evidence type="ECO:0000305" key="3"/>
<protein>
    <recommendedName>
        <fullName evidence="1">Alpha-2-macroglobulin</fullName>
    </recommendedName>
</protein>
<accession>Q8XV02</accession>
<dbReference type="EMBL" id="AL646052">
    <property type="protein sequence ID" value="CAD16739.1"/>
    <property type="molecule type" value="Genomic_DNA"/>
</dbReference>
<dbReference type="SMR" id="Q8XV02"/>
<dbReference type="STRING" id="267608.RSc3030"/>
<dbReference type="MEROPS" id="I39.008"/>
<dbReference type="EnsemblBacteria" id="CAD16739">
    <property type="protein sequence ID" value="CAD16739"/>
    <property type="gene ID" value="RSc3030"/>
</dbReference>
<dbReference type="KEGG" id="rso:RSc3030"/>
<dbReference type="eggNOG" id="COG2373">
    <property type="taxonomic scope" value="Bacteria"/>
</dbReference>
<dbReference type="HOGENOM" id="CLU_004561_0_0_4"/>
<dbReference type="Proteomes" id="UP000001436">
    <property type="component" value="Chromosome"/>
</dbReference>
<dbReference type="GO" id="GO:0004866">
    <property type="term" value="F:endopeptidase inhibitor activity"/>
    <property type="evidence" value="ECO:0007669"/>
    <property type="project" value="InterPro"/>
</dbReference>
<dbReference type="Gene3D" id="1.50.10.20">
    <property type="match status" value="1"/>
</dbReference>
<dbReference type="Gene3D" id="2.60.40.1930">
    <property type="match status" value="1"/>
</dbReference>
<dbReference type="Gene3D" id="2.60.40.10">
    <property type="entry name" value="Immunoglobulins"/>
    <property type="match status" value="1"/>
</dbReference>
<dbReference type="InterPro" id="IPR011625">
    <property type="entry name" value="A2M_N_BRD"/>
</dbReference>
<dbReference type="InterPro" id="IPR047565">
    <property type="entry name" value="Alpha-macroglob_thiol-ester_cl"/>
</dbReference>
<dbReference type="InterPro" id="IPR013783">
    <property type="entry name" value="Ig-like_fold"/>
</dbReference>
<dbReference type="InterPro" id="IPR001599">
    <property type="entry name" value="Macroglobln_a2"/>
</dbReference>
<dbReference type="InterPro" id="IPR002890">
    <property type="entry name" value="MG2"/>
</dbReference>
<dbReference type="InterPro" id="IPR008930">
    <property type="entry name" value="Terpenoid_cyclase/PrenylTrfase"/>
</dbReference>
<dbReference type="InterPro" id="IPR051802">
    <property type="entry name" value="YfhM-like"/>
</dbReference>
<dbReference type="PANTHER" id="PTHR40094">
    <property type="entry name" value="ALPHA-2-MACROGLOBULIN HOMOLOG"/>
    <property type="match status" value="1"/>
</dbReference>
<dbReference type="PANTHER" id="PTHR40094:SF1">
    <property type="entry name" value="UBIQUITIN DOMAIN-CONTAINING PROTEIN"/>
    <property type="match status" value="1"/>
</dbReference>
<dbReference type="Pfam" id="PF00207">
    <property type="entry name" value="A2M"/>
    <property type="match status" value="1"/>
</dbReference>
<dbReference type="Pfam" id="PF07703">
    <property type="entry name" value="A2M_BRD"/>
    <property type="match status" value="1"/>
</dbReference>
<dbReference type="Pfam" id="PF01835">
    <property type="entry name" value="MG2"/>
    <property type="match status" value="1"/>
</dbReference>
<dbReference type="SMART" id="SM01360">
    <property type="entry name" value="A2M"/>
    <property type="match status" value="1"/>
</dbReference>
<dbReference type="SMART" id="SM01359">
    <property type="entry name" value="A2M_N_2"/>
    <property type="match status" value="1"/>
</dbReference>
<dbReference type="SMART" id="SM01419">
    <property type="entry name" value="Thiol-ester_cl"/>
    <property type="match status" value="1"/>
</dbReference>
<dbReference type="SUPFAM" id="SSF48239">
    <property type="entry name" value="Terpenoid cyclases/Protein prenyltransferases"/>
    <property type="match status" value="1"/>
</dbReference>
<sequence length="1582" mass="170091">MICLAALAVAVPARADEAAAVRDKPNPTLAEVPASGYVPFTGQPFFLLSDASYGTDQEAMVRLEAPGREYKDELARYGGADILVYRVPQPLDFLKAQKNLHRIDVKANYTGEGLANTLAYLWDNWTRQARRAWQRVLSFATRSKAVEAAPQFSMGDQMAAPTRFSNPPQYAPLKGYELLGRFRYPIWEAKPIAPPKDVKLEGSSSEWMPQNVGNVMIPVGKLPAGLYIVEAVIGAYRAHTLLFVSDTVAVTKGTSQGMMVWTAERKSGKPVAGSAVSWTDGVGVLASGTTQADGTAELRHVAPERSYVLGVDRAGGVFISENFYYDSEIYNTKLYAFTDRPLYRPGDDVRVKFIGRNFRSATESTAPAAGDIKLDVIDPTGAPVATTTTRLSGETGADARFTLPSNAQAGGYTLRFDYGGSTYGGAFRVAEYIKPHFDVNLSLDKAGYGTGEAIKGKISLRYPDGKPVKDGKVSVSLRAQQVTMVEGELQYAGLFPVKLEQQELTTDGDGNAALTLPAAKEPSRYVVTVFANDGAAYRVKVTRELLVARGAAPYRLSTAANFTTPGQSVSFNLQPLPAVDGVRGASAPPAKWELVRLESRTRTEGALQPDAKGSATFPVKFEQPGSYTLSVRDAAGNLLAASSHWVAGDGVQTVPGNIEIVFDRDRYQIGDTAEALITFPQPVDDALLTLERDKVERHALLSGGGDWLALQRVTPSQYRARIKIGAEFSPNMTFSALTVRDGDMVFQNAGIVVTQPALDLTVRADKAVYAPGETVTLDLSSALAGKPVPANLTVSVVDEMVYVLQPEVAPSIVDFFYHPRRNSVRTTSSQSFISYDLALSSLPGKPGGTYGRHNERGVKVLERPRRDEQDTAAWVANLQTGADGRARMTFTMPDSLARWRVTVRAVSTTGAADGIVGQRTASIRSDKALYLKWTGPSRFRESDQPRLDMVAFNQTDKDITADWIVSGAGLNINQRVTLKRGANYLHAPLSGTPALQAGIVNAELKQDDRVSDRLQTTVKLDATGWLADRESIVPLTQLQGTRLPLGLPADARDVRLRVVGNTASQFARVADDLIEYPYGCAEQTASRLIPLALAQQSLAATGARLPDGNPAGTQGVDALLRTQRQRLALLAGTNGTFGWWGELTSSSALITSYAYYADWLASRAVGISLPADNWKQVLEAYKRTSQNEPLLHRALALWFANEMGLPVATPLSGVAAELARNAKAPADAEPAPGDSLIFVAPDSPRGRQVAAILTAQLMRQVGQPVPEALVSADIAARTALANDTSPLVQSLLLMGGGRSAADPAPLLARASAAMPTMDRAVALVWLQKGLGGLQGANVAAIQPVLSAGGWQAARSTVGVPTWRWAGAQPPAALDLASTPSDVTTQSAIVSYRSRAPEASRLPITVERKLYRLEPVDAAAPKDDAKAPKRAAADVTANAGITFKAKPVKPGDTLDSNALYVDEVVLTPRQGTYRYGLVEVPLPPGAEVEATTWGIQIDGLKGEPNEGNGPQPFERRAAYEMGQLSYNQPVPTLERPTALRQLVRFSLPGRFALPPARYFRMYQPEAKALQGDGKAASYPFKVE</sequence>
<proteinExistence type="inferred from homology"/>
<keyword id="KW-0646">Protease inhibitor</keyword>
<keyword id="KW-1185">Reference proteome</keyword>
<keyword id="KW-0732">Signal</keyword>
<keyword id="KW-0882">Thioester bond</keyword>